<feature type="signal peptide" evidence="2">
    <location>
        <begin position="1"/>
        <end position="27"/>
    </location>
</feature>
<feature type="chain" id="PRO_0000412537" description="Neurexin-1a">
    <location>
        <begin position="28"/>
        <end position="1491"/>
    </location>
</feature>
<feature type="topological domain" description="Extracellular" evidence="2">
    <location>
        <begin position="28"/>
        <end position="1415"/>
    </location>
</feature>
<feature type="transmembrane region" description="Helical" evidence="2">
    <location>
        <begin position="1416"/>
        <end position="1436"/>
    </location>
</feature>
<feature type="topological domain" description="Cytoplasmic" evidence="2">
    <location>
        <begin position="1437"/>
        <end position="1491"/>
    </location>
</feature>
<feature type="domain" description="Laminin G-like 1" evidence="4">
    <location>
        <begin position="28"/>
        <end position="208"/>
    </location>
</feature>
<feature type="domain" description="EGF-like 1" evidence="3">
    <location>
        <begin position="198"/>
        <end position="236"/>
    </location>
</feature>
<feature type="domain" description="Laminin G-like 2" evidence="4">
    <location>
        <begin position="263"/>
        <end position="460"/>
    </location>
</feature>
<feature type="domain" description="Laminin G-like 3" evidence="4">
    <location>
        <begin position="467"/>
        <end position="661"/>
    </location>
</feature>
<feature type="domain" description="EGF-like 2" evidence="3">
    <location>
        <begin position="665"/>
        <end position="702"/>
    </location>
</feature>
<feature type="domain" description="Laminin G-like 4" evidence="4">
    <location>
        <begin position="707"/>
        <end position="880"/>
    </location>
</feature>
<feature type="domain" description="Laminin G-like 5" evidence="4">
    <location>
        <begin position="894"/>
        <end position="1069"/>
    </location>
</feature>
<feature type="domain" description="EGF-like 3" evidence="3">
    <location>
        <begin position="1072"/>
        <end position="1109"/>
    </location>
</feature>
<feature type="domain" description="Laminin G-like 6" evidence="4">
    <location>
        <begin position="1113"/>
        <end position="1314"/>
    </location>
</feature>
<feature type="region of interest" description="Disordered" evidence="5">
    <location>
        <begin position="1318"/>
        <end position="1408"/>
    </location>
</feature>
<feature type="region of interest" description="Disordered" evidence="5">
    <location>
        <begin position="1457"/>
        <end position="1491"/>
    </location>
</feature>
<feature type="compositionally biased region" description="Low complexity" evidence="5">
    <location>
        <begin position="1322"/>
        <end position="1353"/>
    </location>
</feature>
<feature type="compositionally biased region" description="Polar residues" evidence="5">
    <location>
        <begin position="1354"/>
        <end position="1364"/>
    </location>
</feature>
<feature type="binding site" evidence="1">
    <location>
        <position position="309"/>
    </location>
    <ligand>
        <name>Ca(2+)</name>
        <dbReference type="ChEBI" id="CHEBI:29108"/>
    </ligand>
</feature>
<feature type="binding site" evidence="1">
    <location>
        <position position="326"/>
    </location>
    <ligand>
        <name>Ca(2+)</name>
        <dbReference type="ChEBI" id="CHEBI:29108"/>
    </ligand>
</feature>
<feature type="binding site" evidence="1">
    <location>
        <position position="394"/>
    </location>
    <ligand>
        <name>Ca(2+)</name>
        <dbReference type="ChEBI" id="CHEBI:29108"/>
    </ligand>
</feature>
<feature type="disulfide bond" evidence="1">
    <location>
        <begin position="202"/>
        <end position="214"/>
    </location>
</feature>
<feature type="disulfide bond" evidence="1">
    <location>
        <begin position="208"/>
        <end position="223"/>
    </location>
</feature>
<feature type="disulfide bond" evidence="1">
    <location>
        <begin position="225"/>
        <end position="235"/>
    </location>
</feature>
<feature type="disulfide bond" evidence="1">
    <location>
        <begin position="424"/>
        <end position="460"/>
    </location>
</feature>
<feature type="disulfide bond" evidence="1">
    <location>
        <begin position="632"/>
        <end position="661"/>
    </location>
</feature>
<feature type="disulfide bond" evidence="1">
    <location>
        <begin position="669"/>
        <end position="680"/>
    </location>
</feature>
<feature type="disulfide bond" evidence="1">
    <location>
        <begin position="674"/>
        <end position="689"/>
    </location>
</feature>
<feature type="disulfide bond" evidence="1">
    <location>
        <begin position="691"/>
        <end position="701"/>
    </location>
</feature>
<feature type="disulfide bond" evidence="1">
    <location>
        <begin position="1041"/>
        <end position="1069"/>
    </location>
</feature>
<feature type="disulfide bond" evidence="1">
    <location>
        <begin position="1076"/>
        <end position="1087"/>
    </location>
</feature>
<feature type="disulfide bond" evidence="1">
    <location>
        <begin position="1081"/>
        <end position="1096"/>
    </location>
</feature>
<feature type="disulfide bond" evidence="1">
    <location>
        <begin position="1098"/>
        <end position="1108"/>
    </location>
</feature>
<name>NR1AA_DANRE</name>
<gene>
    <name type="primary">nrxn1a</name>
</gene>
<protein>
    <recommendedName>
        <fullName>Neurexin-1a</fullName>
    </recommendedName>
    <alternativeName>
        <fullName>Neurexin Ia-alpha</fullName>
    </alternativeName>
    <alternativeName>
        <fullName>Neurexin-1a-alpha</fullName>
    </alternativeName>
</protein>
<accession>A1XQX0</accession>
<proteinExistence type="evidence at transcript level"/>
<keyword id="KW-0877">Alternative promoter usage</keyword>
<keyword id="KW-0025">Alternative splicing</keyword>
<keyword id="KW-0106">Calcium</keyword>
<keyword id="KW-0130">Cell adhesion</keyword>
<keyword id="KW-1015">Disulfide bond</keyword>
<keyword id="KW-0245">EGF-like domain</keyword>
<keyword id="KW-0472">Membrane</keyword>
<keyword id="KW-0479">Metal-binding</keyword>
<keyword id="KW-1185">Reference proteome</keyword>
<keyword id="KW-0677">Repeat</keyword>
<keyword id="KW-0732">Signal</keyword>
<keyword id="KW-0812">Transmembrane</keyword>
<keyword id="KW-1133">Transmembrane helix</keyword>
<organism>
    <name type="scientific">Danio rerio</name>
    <name type="common">Zebrafish</name>
    <name type="synonym">Brachydanio rerio</name>
    <dbReference type="NCBI Taxonomy" id="7955"/>
    <lineage>
        <taxon>Eukaryota</taxon>
        <taxon>Metazoa</taxon>
        <taxon>Chordata</taxon>
        <taxon>Craniata</taxon>
        <taxon>Vertebrata</taxon>
        <taxon>Euteleostomi</taxon>
        <taxon>Actinopterygii</taxon>
        <taxon>Neopterygii</taxon>
        <taxon>Teleostei</taxon>
        <taxon>Ostariophysi</taxon>
        <taxon>Cypriniformes</taxon>
        <taxon>Danionidae</taxon>
        <taxon>Danioninae</taxon>
        <taxon>Danio</taxon>
    </lineage>
</organism>
<dbReference type="EMBL" id="DQ641424">
    <property type="protein sequence ID" value="ABG25161.1"/>
    <property type="molecule type" value="mRNA"/>
</dbReference>
<dbReference type="RefSeq" id="NP_001073490.1">
    <molecule id="A1XQX0-1"/>
    <property type="nucleotide sequence ID" value="NM_001080021.2"/>
</dbReference>
<dbReference type="SMR" id="A1XQX0"/>
<dbReference type="FunCoup" id="A1XQX0">
    <property type="interactions" value="1048"/>
</dbReference>
<dbReference type="PaxDb" id="7955-ENSDARP00000087526"/>
<dbReference type="Ensembl" id="ENSDART00000111239">
    <molecule id="A1XQX0-1"/>
    <property type="protein sequence ID" value="ENSDARP00000102322"/>
    <property type="gene ID" value="ENSDARG00000061647"/>
</dbReference>
<dbReference type="GeneID" id="565531"/>
<dbReference type="KEGG" id="dre:565531"/>
<dbReference type="AGR" id="ZFIN:ZDB-GENE-070206-1"/>
<dbReference type="CTD" id="565531"/>
<dbReference type="ZFIN" id="ZDB-GENE-070206-1">
    <property type="gene designation" value="nrxn1a"/>
</dbReference>
<dbReference type="eggNOG" id="KOG3514">
    <property type="taxonomic scope" value="Eukaryota"/>
</dbReference>
<dbReference type="InParanoid" id="A1XQX0"/>
<dbReference type="OMA" id="NEYFSYN"/>
<dbReference type="OrthoDB" id="5989513at2759"/>
<dbReference type="PhylomeDB" id="A1XQX0"/>
<dbReference type="TreeFam" id="TF321302"/>
<dbReference type="Reactome" id="R-DRE-6794361">
    <property type="pathway name" value="Neurexins and neuroligins"/>
</dbReference>
<dbReference type="Proteomes" id="UP000000437">
    <property type="component" value="Alternate scaffold 12"/>
</dbReference>
<dbReference type="Proteomes" id="UP000000437">
    <property type="component" value="Chromosome 12"/>
</dbReference>
<dbReference type="Bgee" id="ENSDARG00000061647">
    <property type="expression patterns" value="Expressed in brain and 7 other cell types or tissues"/>
</dbReference>
<dbReference type="ExpressionAtlas" id="A1XQX0">
    <property type="expression patterns" value="baseline and differential"/>
</dbReference>
<dbReference type="GO" id="GO:0016020">
    <property type="term" value="C:membrane"/>
    <property type="evidence" value="ECO:0007669"/>
    <property type="project" value="UniProtKB-SubCell"/>
</dbReference>
<dbReference type="GO" id="GO:0046872">
    <property type="term" value="F:metal ion binding"/>
    <property type="evidence" value="ECO:0007669"/>
    <property type="project" value="UniProtKB-KW"/>
</dbReference>
<dbReference type="GO" id="GO:0007155">
    <property type="term" value="P:cell adhesion"/>
    <property type="evidence" value="ECO:0007669"/>
    <property type="project" value="UniProtKB-KW"/>
</dbReference>
<dbReference type="GO" id="GO:0002040">
    <property type="term" value="P:sprouting angiogenesis"/>
    <property type="evidence" value="ECO:0000315"/>
    <property type="project" value="ZFIN"/>
</dbReference>
<dbReference type="CDD" id="cd00054">
    <property type="entry name" value="EGF_CA"/>
    <property type="match status" value="2"/>
</dbReference>
<dbReference type="CDD" id="cd00110">
    <property type="entry name" value="LamG"/>
    <property type="match status" value="6"/>
</dbReference>
<dbReference type="FunFam" id="2.10.25.10:FF:000015">
    <property type="entry name" value="neurexin-1 isoform X1"/>
    <property type="match status" value="1"/>
</dbReference>
<dbReference type="FunFam" id="2.10.25.10:FF:000029">
    <property type="entry name" value="neurexin-1 isoform X1"/>
    <property type="match status" value="1"/>
</dbReference>
<dbReference type="FunFam" id="2.60.120.200:FF:000001">
    <property type="entry name" value="neurexin-1 isoform X1"/>
    <property type="match status" value="1"/>
</dbReference>
<dbReference type="FunFam" id="2.60.120.200:FF:000003">
    <property type="entry name" value="neurexin-1 isoform X1"/>
    <property type="match status" value="1"/>
</dbReference>
<dbReference type="FunFam" id="2.60.120.200:FF:000004">
    <property type="entry name" value="neurexin-1 isoform X1"/>
    <property type="match status" value="1"/>
</dbReference>
<dbReference type="FunFam" id="2.60.120.200:FF:000005">
    <property type="entry name" value="neurexin-1 isoform X1"/>
    <property type="match status" value="1"/>
</dbReference>
<dbReference type="FunFam" id="2.60.120.200:FF:000007">
    <property type="entry name" value="neurexin-1 isoform X1"/>
    <property type="match status" value="1"/>
</dbReference>
<dbReference type="FunFam" id="2.60.120.200:FF:000014">
    <property type="entry name" value="neurexin-1 isoform X1"/>
    <property type="match status" value="1"/>
</dbReference>
<dbReference type="Gene3D" id="2.60.120.200">
    <property type="match status" value="6"/>
</dbReference>
<dbReference type="Gene3D" id="2.10.25.10">
    <property type="entry name" value="Laminin"/>
    <property type="match status" value="3"/>
</dbReference>
<dbReference type="InterPro" id="IPR013320">
    <property type="entry name" value="ConA-like_dom_sf"/>
</dbReference>
<dbReference type="InterPro" id="IPR000742">
    <property type="entry name" value="EGF-like_dom"/>
</dbReference>
<dbReference type="InterPro" id="IPR001791">
    <property type="entry name" value="Laminin_G"/>
</dbReference>
<dbReference type="InterPro" id="IPR003585">
    <property type="entry name" value="Neurexin-like"/>
</dbReference>
<dbReference type="InterPro" id="IPR050372">
    <property type="entry name" value="Neurexin-related_CASP"/>
</dbReference>
<dbReference type="PANTHER" id="PTHR15036">
    <property type="entry name" value="PIKACHURIN-LIKE PROTEIN"/>
    <property type="match status" value="1"/>
</dbReference>
<dbReference type="PANTHER" id="PTHR15036:SF85">
    <property type="entry name" value="SP2353, ISOFORM A"/>
    <property type="match status" value="1"/>
</dbReference>
<dbReference type="Pfam" id="PF00008">
    <property type="entry name" value="EGF"/>
    <property type="match status" value="1"/>
</dbReference>
<dbReference type="Pfam" id="PF02210">
    <property type="entry name" value="Laminin_G_2"/>
    <property type="match status" value="6"/>
</dbReference>
<dbReference type="SMART" id="SM00294">
    <property type="entry name" value="4.1m"/>
    <property type="match status" value="1"/>
</dbReference>
<dbReference type="SMART" id="SM00181">
    <property type="entry name" value="EGF"/>
    <property type="match status" value="3"/>
</dbReference>
<dbReference type="SMART" id="SM00282">
    <property type="entry name" value="LamG"/>
    <property type="match status" value="6"/>
</dbReference>
<dbReference type="SUPFAM" id="SSF49899">
    <property type="entry name" value="Concanavalin A-like lectins/glucanases"/>
    <property type="match status" value="6"/>
</dbReference>
<dbReference type="PROSITE" id="PS50026">
    <property type="entry name" value="EGF_3"/>
    <property type="match status" value="3"/>
</dbReference>
<dbReference type="PROSITE" id="PS50025">
    <property type="entry name" value="LAM_G_DOMAIN"/>
    <property type="match status" value="6"/>
</dbReference>
<evidence type="ECO:0000250" key="1"/>
<evidence type="ECO:0000255" key="2"/>
<evidence type="ECO:0000255" key="3">
    <source>
        <dbReference type="PROSITE-ProRule" id="PRU00076"/>
    </source>
</evidence>
<evidence type="ECO:0000255" key="4">
    <source>
        <dbReference type="PROSITE-ProRule" id="PRU00122"/>
    </source>
</evidence>
<evidence type="ECO:0000256" key="5">
    <source>
        <dbReference type="SAM" id="MobiDB-lite"/>
    </source>
</evidence>
<evidence type="ECO:0000269" key="6">
    <source>
    </source>
</evidence>
<evidence type="ECO:0000305" key="7"/>
<reference key="1">
    <citation type="journal article" date="2007" name="Mol. Biol. Evol.">
        <title>Comparative genome analysis of the neurexin gene family in Danio rerio: insights into their functions and evolution.</title>
        <authorList>
            <person name="Rissone A."/>
            <person name="Monopoli M."/>
            <person name="Beltrame M."/>
            <person name="Bussolino F."/>
            <person name="Cotelli F."/>
            <person name="Arese M."/>
        </authorList>
    </citation>
    <scope>NUCLEOTIDE SEQUENCE [MRNA]</scope>
    <scope>DEVELOPMENTAL STAGE</scope>
    <scope>ALTERNATIVE SPLICING</scope>
</reference>
<comment type="function">
    <text>Neuronal cell surface protein that may be involved in cell recognition and cell adhesion.</text>
</comment>
<comment type="subcellular location">
    <subcellularLocation>
        <location evidence="7">Membrane</location>
        <topology evidence="7">Single-pass type I membrane protein</topology>
    </subcellularLocation>
</comment>
<comment type="alternative products">
    <event type="alternative promoter"/>
    <event type="alternative splicing"/>
    <isoform>
        <id>A1XQX0-1</id>
        <name>Alpha</name>
        <sequence type="displayed"/>
    </isoform>
    <isoform>
        <id>A1XQX1-1</id>
        <name>Beta</name>
        <sequence type="external"/>
    </isoform>
    <text>A number of isoforms, alpha-type and beta-type are produced by alternative promoter usage. Beta-type isoforms differ from alpha-type isoforms in their N-terminus.</text>
</comment>
<comment type="developmental stage">
    <text evidence="6">After the very early developmental stages, the expression levels decrease and remain relatively constant until around 24 h, with the onset of an increase of expression that continues till the larval stages.</text>
</comment>
<comment type="similarity">
    <text evidence="7">Belongs to the neurexin family.</text>
</comment>
<sequence length="1491" mass="164313">MSFSMRNGAHLIWIGLLVCCLVDMGASMEFTGAEGQWARFPMWNACCESEMSFNMKTKSAHGLLVYFDDEGFCDFLELLIHNGRLSLRFSIFCAEPATVFSDTAVNDSRWHAVTLRRNFKNTTLVVDEEIKWVEVKSKRRDMTVFSHLFLGGIPPELRSVALRLTSSAIKDEVPYKGWITNLRVNGSEPVLIGSDGVNSDICEADHICLNGGVCSIVNDEPICDCSETGFQGKDCSEEEAYVGGLAHLMMGDQGKRKEREEYMATFKGSEYFCYDLSPNPIQSSSDEITLSFKTLQRNGLMLHTGKSADYVNLALKNGAVSLVINLGSGAFEALVEPVNGKFNDNAWHDVKVTRNLRQHSGIGHAMVNKLHCSVTISVDGILTTTGYTQEDYTMLGSDDFFYVGGSPSTADLPGSPVSNNFMGCLKEVVYKNNDVRLELSRLAKLGDPKMKVSGVVAFKCENVATLDPVTFETPESFITLDKWSAKKAGSISFDFRTTEPNGLLLFSHGKPKPQQQKDPKSPKTLKVDFFAIEMLDGHLYLLLDMGSGTTKTRAVNKKVNDGEWYHVDFQRDGRSGTISVNSIRTPYNAPGESEILDLDDKLYLGGLPEDRAGLIFPTEVWTALLNYGYVGCVRDLFMDGQSKDIRRIAEAQRAVGVKPSCSKEPPKQCLSNPCLNSGTCREGWNRYVCDCSGTGYLGRSCERDATILSYDGSKFMKIQLPVVMHTEAEDVSLRFRSQRAYGVLMATTSQNSADTLRLELDGGRVRLTVNLDCIRINCTTSKGPETIFSGQNLNDNEWHTVRVVRRGKSLKLMVDDLQPSEGQITGDHTQLEFHNVETGIVTEKRYMPAVPSNFIGHLQGLSFNGMSYIDLCKNGDIDYCELNAMIGYRSIVADPVTFKSRSSYVTLPTLQAYYSMHLFFQFKTTSPDGLILYNRGDGNDFIVVELVKGYLHYVSDLGNGAHLIKGNSNTPLNDNHWHNVMISRDTNNLHTVKIDTKITTQTTMGAKNLDLKGDLYVGGVAKDMYKDLPKLVHSKEGFQGCLASVDLNGRLPDLQSDALSTAGQVERGCEGPSTTCQEDSCSNQGVCLQQWEGFSCDCSMTSYGGPLCNDPGTTYIFGRDGGLIVYTWPPNDRPSTRADRLAVGFSTQQKDAVLVRVDSSSGLGDYLQLQIERGNIKVVFNVGTDDINIEETSKFVNDGKYHIVRFTRSGGNATLQVDDLPVIERYPSGNIDNERLAIARQRIPYRLGRVVDDWLLDKGRQLTIFNSQTTIKIGGWEKGSRPFQGQLSGLYYNGLKVLNMAAEGDPNVRVEGSARLVGDMPSSSITPQSSVSAAGNRSETSPSITDITTTTASNRQGKQTTTPQDDLLVASAECPSDDEDIDPCDPSSGGLAHPPLPEAKGYPSPEVIRESSSTTGMVVGIVAAAALCILILLYAMYKYRNRDEGSYHVDESRNYISNSATQPNGAAVKEKPIGVPKNKKDKKNKDKEYYV</sequence>